<comment type="function">
    <text evidence="1">Produces ATP from ADP in the presence of a proton gradient across the membrane. The alpha chain is a regulatory subunit.</text>
</comment>
<comment type="catalytic activity">
    <reaction evidence="1">
        <text>ATP + H2O + 4 H(+)(in) = ADP + phosphate + 5 H(+)(out)</text>
        <dbReference type="Rhea" id="RHEA:57720"/>
        <dbReference type="ChEBI" id="CHEBI:15377"/>
        <dbReference type="ChEBI" id="CHEBI:15378"/>
        <dbReference type="ChEBI" id="CHEBI:30616"/>
        <dbReference type="ChEBI" id="CHEBI:43474"/>
        <dbReference type="ChEBI" id="CHEBI:456216"/>
        <dbReference type="EC" id="7.1.2.2"/>
    </reaction>
</comment>
<comment type="subunit">
    <text evidence="1">F-type ATPases have 2 components, CF(1) - the catalytic core - and CF(0) - the membrane proton channel. CF(1) has five subunits: alpha(3), beta(3), gamma(1), delta(1), epsilon(1). CF(0) has three main subunits: a(1), b(2) and c(9-12). The alpha and beta chains form an alternating ring which encloses part of the gamma chain. CF(1) is attached to CF(0) by a central stalk formed by the gamma and epsilon chains, while a peripheral stalk is formed by the delta and b chains.</text>
</comment>
<comment type="subcellular location">
    <subcellularLocation>
        <location evidence="1">Cell membrane</location>
        <topology evidence="1">Peripheral membrane protein</topology>
    </subcellularLocation>
</comment>
<comment type="similarity">
    <text evidence="1">Belongs to the ATPase alpha/beta chains family.</text>
</comment>
<evidence type="ECO:0000255" key="1">
    <source>
        <dbReference type="HAMAP-Rule" id="MF_01346"/>
    </source>
</evidence>
<feature type="chain" id="PRO_0000256081" description="ATP synthase subunit alpha">
    <location>
        <begin position="1"/>
        <end position="513"/>
    </location>
</feature>
<feature type="binding site" evidence="1">
    <location>
        <begin position="169"/>
        <end position="176"/>
    </location>
    <ligand>
        <name>ATP</name>
        <dbReference type="ChEBI" id="CHEBI:30616"/>
    </ligand>
</feature>
<feature type="site" description="Required for activity" evidence="1">
    <location>
        <position position="373"/>
    </location>
</feature>
<proteinExistence type="inferred from homology"/>
<protein>
    <recommendedName>
        <fullName evidence="1">ATP synthase subunit alpha</fullName>
        <ecNumber evidence="1">7.1.2.2</ecNumber>
    </recommendedName>
    <alternativeName>
        <fullName evidence="1">ATP synthase F1 sector subunit alpha</fullName>
    </alternativeName>
    <alternativeName>
        <fullName evidence="1">F-ATPase subunit alpha</fullName>
    </alternativeName>
</protein>
<name>ATPA_BAUCH</name>
<keyword id="KW-0066">ATP synthesis</keyword>
<keyword id="KW-0067">ATP-binding</keyword>
<keyword id="KW-1003">Cell membrane</keyword>
<keyword id="KW-0139">CF(1)</keyword>
<keyword id="KW-0375">Hydrogen ion transport</keyword>
<keyword id="KW-0406">Ion transport</keyword>
<keyword id="KW-0472">Membrane</keyword>
<keyword id="KW-0547">Nucleotide-binding</keyword>
<keyword id="KW-1185">Reference proteome</keyword>
<keyword id="KW-1278">Translocase</keyword>
<keyword id="KW-0813">Transport</keyword>
<organism>
    <name type="scientific">Baumannia cicadellinicola subsp. Homalodisca coagulata</name>
    <dbReference type="NCBI Taxonomy" id="374463"/>
    <lineage>
        <taxon>Bacteria</taxon>
        <taxon>Pseudomonadati</taxon>
        <taxon>Pseudomonadota</taxon>
        <taxon>Gammaproteobacteria</taxon>
        <taxon>Candidatus Palibaumannia</taxon>
    </lineage>
</organism>
<accession>Q1LTV2</accession>
<sequence length="513" mass="56704">MQLNSTEISELIKQRIVEFDLTSIIYNEGIILSVIDGIIRIHGLSEVMQGEMIALPGNSFAIALNLERDEVGAVVMGPYSHLTEGMKVKCTGRILEVPVGHSLLGRIVNTLGIPIDGKGKLENKLFSPIETNAPNVIERQSISEPIQTGYKSIDAMIPIGRGQRELIIGDRQTGKSTLAIDTIINQRNSDIKCIYVAIGQKASTINNVVQKLEEHNALINTIIVTATASDSVALQYLAPYAGCVMGEYFRNIGENALVIYDDLSKQAIAYRQISLLLRRPPGREAYPGDIFYLHSRLLERAARVSANYVETYTKGKIKGKTGSLTALPIIETQAGDVSSFIPTNVISITDGQIFLESSLFNAGIRPAVNPGISVSRVGSAAQTKIIKTVSSGIRTTLAQYRELEAFSQFASDLDEVTRKQINYGKKVTELLKQKQHMPMSVSQQALVLFAAEQGYLEDINLKKINDFETQLLLYVKHQYHDFMKIIDQEGNYNDDIEKTLTEIISKFKTNASF</sequence>
<gene>
    <name evidence="1" type="primary">atpA</name>
    <name type="ordered locus">BCI_0143</name>
</gene>
<dbReference type="EC" id="7.1.2.2" evidence="1"/>
<dbReference type="EMBL" id="CP000238">
    <property type="protein sequence ID" value="ABF13922.1"/>
    <property type="molecule type" value="Genomic_DNA"/>
</dbReference>
<dbReference type="RefSeq" id="WP_011520345.1">
    <property type="nucleotide sequence ID" value="NC_007984.1"/>
</dbReference>
<dbReference type="SMR" id="Q1LTV2"/>
<dbReference type="STRING" id="374463.BCI_0143"/>
<dbReference type="KEGG" id="bci:BCI_0143"/>
<dbReference type="HOGENOM" id="CLU_010091_2_1_6"/>
<dbReference type="OrthoDB" id="9803053at2"/>
<dbReference type="Proteomes" id="UP000002427">
    <property type="component" value="Chromosome"/>
</dbReference>
<dbReference type="GO" id="GO:0005886">
    <property type="term" value="C:plasma membrane"/>
    <property type="evidence" value="ECO:0007669"/>
    <property type="project" value="UniProtKB-SubCell"/>
</dbReference>
<dbReference type="GO" id="GO:0045259">
    <property type="term" value="C:proton-transporting ATP synthase complex"/>
    <property type="evidence" value="ECO:0007669"/>
    <property type="project" value="UniProtKB-KW"/>
</dbReference>
<dbReference type="GO" id="GO:0043531">
    <property type="term" value="F:ADP binding"/>
    <property type="evidence" value="ECO:0007669"/>
    <property type="project" value="TreeGrafter"/>
</dbReference>
<dbReference type="GO" id="GO:0005524">
    <property type="term" value="F:ATP binding"/>
    <property type="evidence" value="ECO:0007669"/>
    <property type="project" value="UniProtKB-UniRule"/>
</dbReference>
<dbReference type="GO" id="GO:0046933">
    <property type="term" value="F:proton-transporting ATP synthase activity, rotational mechanism"/>
    <property type="evidence" value="ECO:0007669"/>
    <property type="project" value="UniProtKB-UniRule"/>
</dbReference>
<dbReference type="CDD" id="cd18113">
    <property type="entry name" value="ATP-synt_F1_alpha_C"/>
    <property type="match status" value="1"/>
</dbReference>
<dbReference type="CDD" id="cd18116">
    <property type="entry name" value="ATP-synt_F1_alpha_N"/>
    <property type="match status" value="1"/>
</dbReference>
<dbReference type="CDD" id="cd01132">
    <property type="entry name" value="F1-ATPase_alpha_CD"/>
    <property type="match status" value="1"/>
</dbReference>
<dbReference type="FunFam" id="1.20.150.20:FF:000001">
    <property type="entry name" value="ATP synthase subunit alpha"/>
    <property type="match status" value="1"/>
</dbReference>
<dbReference type="FunFam" id="2.40.30.20:FF:000001">
    <property type="entry name" value="ATP synthase subunit alpha"/>
    <property type="match status" value="1"/>
</dbReference>
<dbReference type="FunFam" id="3.40.50.300:FF:000002">
    <property type="entry name" value="ATP synthase subunit alpha"/>
    <property type="match status" value="1"/>
</dbReference>
<dbReference type="Gene3D" id="2.40.30.20">
    <property type="match status" value="1"/>
</dbReference>
<dbReference type="Gene3D" id="1.20.150.20">
    <property type="entry name" value="ATP synthase alpha/beta chain, C-terminal domain"/>
    <property type="match status" value="1"/>
</dbReference>
<dbReference type="Gene3D" id="3.40.50.300">
    <property type="entry name" value="P-loop containing nucleotide triphosphate hydrolases"/>
    <property type="match status" value="1"/>
</dbReference>
<dbReference type="HAMAP" id="MF_01346">
    <property type="entry name" value="ATP_synth_alpha_bact"/>
    <property type="match status" value="1"/>
</dbReference>
<dbReference type="InterPro" id="IPR023366">
    <property type="entry name" value="ATP_synth_asu-like_sf"/>
</dbReference>
<dbReference type="InterPro" id="IPR000793">
    <property type="entry name" value="ATP_synth_asu_C"/>
</dbReference>
<dbReference type="InterPro" id="IPR038376">
    <property type="entry name" value="ATP_synth_asu_C_sf"/>
</dbReference>
<dbReference type="InterPro" id="IPR033732">
    <property type="entry name" value="ATP_synth_F1_a_nt-bd_dom"/>
</dbReference>
<dbReference type="InterPro" id="IPR005294">
    <property type="entry name" value="ATP_synth_F1_asu"/>
</dbReference>
<dbReference type="InterPro" id="IPR020003">
    <property type="entry name" value="ATPase_a/bsu_AS"/>
</dbReference>
<dbReference type="InterPro" id="IPR004100">
    <property type="entry name" value="ATPase_F1/V1/A1_a/bsu_N"/>
</dbReference>
<dbReference type="InterPro" id="IPR036121">
    <property type="entry name" value="ATPase_F1/V1/A1_a/bsu_N_sf"/>
</dbReference>
<dbReference type="InterPro" id="IPR000194">
    <property type="entry name" value="ATPase_F1/V1/A1_a/bsu_nucl-bd"/>
</dbReference>
<dbReference type="InterPro" id="IPR027417">
    <property type="entry name" value="P-loop_NTPase"/>
</dbReference>
<dbReference type="NCBIfam" id="TIGR00962">
    <property type="entry name" value="atpA"/>
    <property type="match status" value="1"/>
</dbReference>
<dbReference type="NCBIfam" id="NF009884">
    <property type="entry name" value="PRK13343.1"/>
    <property type="match status" value="1"/>
</dbReference>
<dbReference type="PANTHER" id="PTHR48082">
    <property type="entry name" value="ATP SYNTHASE SUBUNIT ALPHA, MITOCHONDRIAL"/>
    <property type="match status" value="1"/>
</dbReference>
<dbReference type="PANTHER" id="PTHR48082:SF2">
    <property type="entry name" value="ATP SYNTHASE SUBUNIT ALPHA, MITOCHONDRIAL"/>
    <property type="match status" value="1"/>
</dbReference>
<dbReference type="Pfam" id="PF00006">
    <property type="entry name" value="ATP-synt_ab"/>
    <property type="match status" value="1"/>
</dbReference>
<dbReference type="Pfam" id="PF00306">
    <property type="entry name" value="ATP-synt_ab_C"/>
    <property type="match status" value="1"/>
</dbReference>
<dbReference type="Pfam" id="PF02874">
    <property type="entry name" value="ATP-synt_ab_N"/>
    <property type="match status" value="1"/>
</dbReference>
<dbReference type="SUPFAM" id="SSF47917">
    <property type="entry name" value="C-terminal domain of alpha and beta subunits of F1 ATP synthase"/>
    <property type="match status" value="1"/>
</dbReference>
<dbReference type="SUPFAM" id="SSF50615">
    <property type="entry name" value="N-terminal domain of alpha and beta subunits of F1 ATP synthase"/>
    <property type="match status" value="1"/>
</dbReference>
<dbReference type="SUPFAM" id="SSF52540">
    <property type="entry name" value="P-loop containing nucleoside triphosphate hydrolases"/>
    <property type="match status" value="1"/>
</dbReference>
<dbReference type="PROSITE" id="PS00152">
    <property type="entry name" value="ATPASE_ALPHA_BETA"/>
    <property type="match status" value="1"/>
</dbReference>
<reference key="1">
    <citation type="journal article" date="2006" name="PLoS Biol.">
        <title>Metabolic complementarity and genomics of the dual bacterial symbiosis of sharpshooters.</title>
        <authorList>
            <person name="Wu D."/>
            <person name="Daugherty S.C."/>
            <person name="Van Aken S.E."/>
            <person name="Pai G.H."/>
            <person name="Watkins K.L."/>
            <person name="Khouri H."/>
            <person name="Tallon L.J."/>
            <person name="Zaborsky J.M."/>
            <person name="Dunbar H.E."/>
            <person name="Tran P.L."/>
            <person name="Moran N.A."/>
            <person name="Eisen J.A."/>
        </authorList>
    </citation>
    <scope>NUCLEOTIDE SEQUENCE [LARGE SCALE GENOMIC DNA]</scope>
</reference>